<sequence length="360" mass="40402">MWTSKTISFTLFITTTLLGSCNASAKAKTQPLFPAILIFGDSTVDTGNNNYPSQTIFRAKHVPYGIDLPNHSPNGRFSNGKIFSDIIATKLNIKQFVPPFLQPNLTDQEIVTGVCFASAGAGYDDQTSLTTQAIRVSEQPNMFKSYIARLKSIVGDKKAMKIINNALVVVSAGPNDFILNYYEVPSWRRMYPSISDYQDFVLSRLNNFVKELYSLGCRKILVGGLPPMGCLPIQMTAQFRNVLRFCLEQENRDSVLYNQKLQKLLPQTQASLTGSKILYSDVYDPMMEMLQNPSKYGFKETTRGCCGTGFLETSFMCNAYSSMCQNRSEFLFFDSIHPSEATYNYIGNVLDTKIRGWLKA</sequence>
<proteinExistence type="evidence at transcript level"/>
<feature type="signal peptide" evidence="2">
    <location>
        <begin position="1"/>
        <end position="23"/>
    </location>
</feature>
<feature type="chain" id="PRO_0000367365" description="GDSL esterase/lipase At1g58430">
    <location>
        <begin position="24"/>
        <end position="360"/>
    </location>
</feature>
<feature type="active site" description="Nucleophile" evidence="1">
    <location>
        <position position="42"/>
    </location>
</feature>
<feature type="active site" evidence="1">
    <location>
        <position position="334"/>
    </location>
</feature>
<feature type="active site" evidence="1">
    <location>
        <position position="337"/>
    </location>
</feature>
<feature type="glycosylation site" description="N-linked (GlcNAc...) asparagine" evidence="2">
    <location>
        <position position="22"/>
    </location>
</feature>
<feature type="glycosylation site" description="N-linked (GlcNAc...) asparagine" evidence="2">
    <location>
        <position position="104"/>
    </location>
</feature>
<feature type="glycosylation site" description="N-linked (GlcNAc...) asparagine" evidence="2">
    <location>
        <position position="326"/>
    </location>
</feature>
<feature type="sequence conflict" description="In Ref. 4; AAM64923." evidence="3" ref="4">
    <original>L</original>
    <variation>F</variation>
    <location>
        <position position="11"/>
    </location>
</feature>
<feature type="sequence conflict" description="In Ref. 4; AAM64923." evidence="3" ref="4">
    <original>T</original>
    <variation>I</variation>
    <location>
        <position position="16"/>
    </location>
</feature>
<feature type="sequence conflict" description="In Ref. 4; AAM64923." evidence="3" ref="4">
    <original>G</original>
    <variation>A</variation>
    <location>
        <position position="19"/>
    </location>
</feature>
<feature type="sequence conflict" description="In Ref. 4; AAM64923." evidence="3" ref="4">
    <original>S</original>
    <variation>T</variation>
    <location>
        <position position="186"/>
    </location>
</feature>
<feature type="sequence conflict" description="In Ref. 4; AAM64923." evidence="3" ref="4">
    <original>SR</original>
    <variation>NK</variation>
    <location>
        <begin position="203"/>
        <end position="204"/>
    </location>
</feature>
<feature type="sequence conflict" description="In Ref. 4; AAM64923." evidence="3" ref="4">
    <original>K</original>
    <variation>M</variation>
    <location>
        <position position="210"/>
    </location>
</feature>
<feature type="sequence conflict" description="In Ref. 1; BAA88267." evidence="3" ref="1">
    <original>S</original>
    <variation>N</variation>
    <location>
        <position position="314"/>
    </location>
</feature>
<feature type="sequence conflict" description="In Ref. 4; AAM64923." evidence="3" ref="4">
    <original>Q</original>
    <variation>E</variation>
    <location>
        <position position="325"/>
    </location>
</feature>
<reference key="1">
    <citation type="journal article" date="1999" name="Gene">
        <title>Isolation and analysis of cDNA within a 300 kb Arabidopsis thaliana genomic region located around the 100 map unit of chromosome 1.</title>
        <authorList>
            <person name="Kato A."/>
            <person name="Suzuki M."/>
            <person name="Kuwahara A."/>
            <person name="Ooe H."/>
            <person name="Higano-Inaba K."/>
            <person name="Komeda Y."/>
        </authorList>
    </citation>
    <scope>NUCLEOTIDE SEQUENCE [GENOMIC DNA / MRNA]</scope>
    <source>
        <strain>cv. Columbia</strain>
    </source>
</reference>
<reference key="2">
    <citation type="journal article" date="2000" name="Nature">
        <title>Sequence and analysis of chromosome 1 of the plant Arabidopsis thaliana.</title>
        <authorList>
            <person name="Theologis A."/>
            <person name="Ecker J.R."/>
            <person name="Palm C.J."/>
            <person name="Federspiel N.A."/>
            <person name="Kaul S."/>
            <person name="White O."/>
            <person name="Alonso J."/>
            <person name="Altafi H."/>
            <person name="Araujo R."/>
            <person name="Bowman C.L."/>
            <person name="Brooks S.Y."/>
            <person name="Buehler E."/>
            <person name="Chan A."/>
            <person name="Chao Q."/>
            <person name="Chen H."/>
            <person name="Cheuk R.F."/>
            <person name="Chin C.W."/>
            <person name="Chung M.K."/>
            <person name="Conn L."/>
            <person name="Conway A.B."/>
            <person name="Conway A.R."/>
            <person name="Creasy T.H."/>
            <person name="Dewar K."/>
            <person name="Dunn P."/>
            <person name="Etgu P."/>
            <person name="Feldblyum T.V."/>
            <person name="Feng J.-D."/>
            <person name="Fong B."/>
            <person name="Fujii C.Y."/>
            <person name="Gill J.E."/>
            <person name="Goldsmith A.D."/>
            <person name="Haas B."/>
            <person name="Hansen N.F."/>
            <person name="Hughes B."/>
            <person name="Huizar L."/>
            <person name="Hunter J.L."/>
            <person name="Jenkins J."/>
            <person name="Johnson-Hopson C."/>
            <person name="Khan S."/>
            <person name="Khaykin E."/>
            <person name="Kim C.J."/>
            <person name="Koo H.L."/>
            <person name="Kremenetskaia I."/>
            <person name="Kurtz D.B."/>
            <person name="Kwan A."/>
            <person name="Lam B."/>
            <person name="Langin-Hooper S."/>
            <person name="Lee A."/>
            <person name="Lee J.M."/>
            <person name="Lenz C.A."/>
            <person name="Li J.H."/>
            <person name="Li Y.-P."/>
            <person name="Lin X."/>
            <person name="Liu S.X."/>
            <person name="Liu Z.A."/>
            <person name="Luros J.S."/>
            <person name="Maiti R."/>
            <person name="Marziali A."/>
            <person name="Militscher J."/>
            <person name="Miranda M."/>
            <person name="Nguyen M."/>
            <person name="Nierman W.C."/>
            <person name="Osborne B.I."/>
            <person name="Pai G."/>
            <person name="Peterson J."/>
            <person name="Pham P.K."/>
            <person name="Rizzo M."/>
            <person name="Rooney T."/>
            <person name="Rowley D."/>
            <person name="Sakano H."/>
            <person name="Salzberg S.L."/>
            <person name="Schwartz J.R."/>
            <person name="Shinn P."/>
            <person name="Southwick A.M."/>
            <person name="Sun H."/>
            <person name="Tallon L.J."/>
            <person name="Tambunga G."/>
            <person name="Toriumi M.J."/>
            <person name="Town C.D."/>
            <person name="Utterback T."/>
            <person name="Van Aken S."/>
            <person name="Vaysberg M."/>
            <person name="Vysotskaia V.S."/>
            <person name="Walker M."/>
            <person name="Wu D."/>
            <person name="Yu G."/>
            <person name="Fraser C.M."/>
            <person name="Venter J.C."/>
            <person name="Davis R.W."/>
        </authorList>
    </citation>
    <scope>NUCLEOTIDE SEQUENCE [LARGE SCALE GENOMIC DNA]</scope>
    <source>
        <strain>cv. Columbia</strain>
    </source>
</reference>
<reference key="3">
    <citation type="journal article" date="2017" name="Plant J.">
        <title>Araport11: a complete reannotation of the Arabidopsis thaliana reference genome.</title>
        <authorList>
            <person name="Cheng C.Y."/>
            <person name="Krishnakumar V."/>
            <person name="Chan A.P."/>
            <person name="Thibaud-Nissen F."/>
            <person name="Schobel S."/>
            <person name="Town C.D."/>
        </authorList>
    </citation>
    <scope>GENOME REANNOTATION</scope>
    <source>
        <strain>cv. Columbia</strain>
    </source>
</reference>
<reference key="4">
    <citation type="submission" date="2002-03" db="EMBL/GenBank/DDBJ databases">
        <title>Full-length cDNA from Arabidopsis thaliana.</title>
        <authorList>
            <person name="Brover V.V."/>
            <person name="Troukhan M.E."/>
            <person name="Alexandrov N.A."/>
            <person name="Lu Y.-P."/>
            <person name="Flavell R.B."/>
            <person name="Feldmann K.A."/>
        </authorList>
    </citation>
    <scope>NUCLEOTIDE SEQUENCE [LARGE SCALE MRNA]</scope>
</reference>
<reference key="5">
    <citation type="journal article" date="2004" name="Prog. Lipid Res.">
        <title>GDSL family of serine esterases/lipases.</title>
        <authorList>
            <person name="Akoh C.C."/>
            <person name="Lee G.-C."/>
            <person name="Liaw Y.-C."/>
            <person name="Huang T.-H."/>
            <person name="Shaw J.-F."/>
        </authorList>
    </citation>
    <scope>REVIEW</scope>
</reference>
<reference key="6">
    <citation type="journal article" date="2008" name="Pak. J. Biol. Sci.">
        <title>Sequence analysis of GDSL lipase gene family in Arabidopsis thaliana.</title>
        <authorList>
            <person name="Ling H."/>
        </authorList>
    </citation>
    <scope>GENE FAMILY</scope>
</reference>
<gene>
    <name type="ordered locus">At1g58430</name>
    <name type="ORF">F9K23.4</name>
</gene>
<protein>
    <recommendedName>
        <fullName>GDSL esterase/lipase At1g58430</fullName>
        <ecNumber>3.1.1.-</ecNumber>
    </recommendedName>
    <alternativeName>
        <fullName>Extracellular lipase At1g58430</fullName>
    </alternativeName>
</protein>
<keyword id="KW-0325">Glycoprotein</keyword>
<keyword id="KW-0378">Hydrolase</keyword>
<keyword id="KW-0442">Lipid degradation</keyword>
<keyword id="KW-0443">Lipid metabolism</keyword>
<keyword id="KW-1185">Reference proteome</keyword>
<keyword id="KW-0964">Secreted</keyword>
<keyword id="KW-0732">Signal</keyword>
<organism>
    <name type="scientific">Arabidopsis thaliana</name>
    <name type="common">Mouse-ear cress</name>
    <dbReference type="NCBI Taxonomy" id="3702"/>
    <lineage>
        <taxon>Eukaryota</taxon>
        <taxon>Viridiplantae</taxon>
        <taxon>Streptophyta</taxon>
        <taxon>Embryophyta</taxon>
        <taxon>Tracheophyta</taxon>
        <taxon>Spermatophyta</taxon>
        <taxon>Magnoliopsida</taxon>
        <taxon>eudicotyledons</taxon>
        <taxon>Gunneridae</taxon>
        <taxon>Pentapetalae</taxon>
        <taxon>rosids</taxon>
        <taxon>malvids</taxon>
        <taxon>Brassicales</taxon>
        <taxon>Brassicaceae</taxon>
        <taxon>Camelineae</taxon>
        <taxon>Arabidopsis</taxon>
    </lineage>
</organism>
<comment type="subcellular location">
    <subcellularLocation>
        <location evidence="3">Secreted</location>
    </subcellularLocation>
</comment>
<comment type="similarity">
    <text evidence="3">Belongs to the 'GDSL' lipolytic enzyme family.</text>
</comment>
<accession>Q9C648</accession>
<accession>Q8LB77</accession>
<accession>Q9SM03</accession>
<dbReference type="EC" id="3.1.1.-"/>
<dbReference type="EMBL" id="AB008020">
    <property type="protein sequence ID" value="BAA88267.1"/>
    <property type="molecule type" value="mRNA"/>
</dbReference>
<dbReference type="EMBL" id="AB077822">
    <property type="protein sequence ID" value="BAB83874.1"/>
    <property type="molecule type" value="Genomic_DNA"/>
</dbReference>
<dbReference type="EMBL" id="AC082643">
    <property type="protein sequence ID" value="AAG50646.1"/>
    <property type="molecule type" value="Genomic_DNA"/>
</dbReference>
<dbReference type="EMBL" id="CP002684">
    <property type="protein sequence ID" value="AEE33548.1"/>
    <property type="molecule type" value="Genomic_DNA"/>
</dbReference>
<dbReference type="EMBL" id="AY087373">
    <property type="protein sequence ID" value="AAM64923.1"/>
    <property type="molecule type" value="mRNA"/>
</dbReference>
<dbReference type="PIR" id="B96618">
    <property type="entry name" value="B96618"/>
</dbReference>
<dbReference type="PIR" id="T52463">
    <property type="entry name" value="T52463"/>
</dbReference>
<dbReference type="RefSeq" id="NP_176139.1">
    <property type="nucleotide sequence ID" value="NM_104623.3"/>
</dbReference>
<dbReference type="SMR" id="Q9C648"/>
<dbReference type="FunCoup" id="Q9C648">
    <property type="interactions" value="116"/>
</dbReference>
<dbReference type="STRING" id="3702.Q9C648"/>
<dbReference type="GlyGen" id="Q9C648">
    <property type="glycosylation" value="3 sites"/>
</dbReference>
<dbReference type="PaxDb" id="3702-AT1G58430.1"/>
<dbReference type="ProteomicsDB" id="221969"/>
<dbReference type="EnsemblPlants" id="AT1G58430.1">
    <property type="protein sequence ID" value="AT1G58430.1"/>
    <property type="gene ID" value="AT1G58430"/>
</dbReference>
<dbReference type="GeneID" id="842212"/>
<dbReference type="Gramene" id="AT1G58430.1">
    <property type="protein sequence ID" value="AT1G58430.1"/>
    <property type="gene ID" value="AT1G58430"/>
</dbReference>
<dbReference type="KEGG" id="ath:AT1G58430"/>
<dbReference type="Araport" id="AT1G58430"/>
<dbReference type="TAIR" id="AT1G58430">
    <property type="gene designation" value="RXF26"/>
</dbReference>
<dbReference type="eggNOG" id="ENOG502QSNM">
    <property type="taxonomic scope" value="Eukaryota"/>
</dbReference>
<dbReference type="HOGENOM" id="CLU_015101_0_1_1"/>
<dbReference type="InParanoid" id="Q9C648"/>
<dbReference type="OMA" id="RCINSEN"/>
<dbReference type="PhylomeDB" id="Q9C648"/>
<dbReference type="BioCyc" id="ARA:AT1G58430-MONOMER"/>
<dbReference type="PRO" id="PR:Q9C648"/>
<dbReference type="Proteomes" id="UP000006548">
    <property type="component" value="Chromosome 1"/>
</dbReference>
<dbReference type="ExpressionAtlas" id="Q9C648">
    <property type="expression patterns" value="baseline and differential"/>
</dbReference>
<dbReference type="GO" id="GO:0005576">
    <property type="term" value="C:extracellular region"/>
    <property type="evidence" value="ECO:0007669"/>
    <property type="project" value="UniProtKB-SubCell"/>
</dbReference>
<dbReference type="GO" id="GO:0016788">
    <property type="term" value="F:hydrolase activity, acting on ester bonds"/>
    <property type="evidence" value="ECO:0007669"/>
    <property type="project" value="InterPro"/>
</dbReference>
<dbReference type="GO" id="GO:0016042">
    <property type="term" value="P:lipid catabolic process"/>
    <property type="evidence" value="ECO:0007669"/>
    <property type="project" value="UniProtKB-KW"/>
</dbReference>
<dbReference type="CDD" id="cd01837">
    <property type="entry name" value="SGNH_plant_lipase_like"/>
    <property type="match status" value="1"/>
</dbReference>
<dbReference type="FunFam" id="3.40.50.1110:FF:000003">
    <property type="entry name" value="GDSL esterase/lipase APG"/>
    <property type="match status" value="1"/>
</dbReference>
<dbReference type="Gene3D" id="3.40.50.1110">
    <property type="entry name" value="SGNH hydrolase"/>
    <property type="match status" value="1"/>
</dbReference>
<dbReference type="InterPro" id="IPR001087">
    <property type="entry name" value="GDSL"/>
</dbReference>
<dbReference type="InterPro" id="IPR050592">
    <property type="entry name" value="GDSL_lipolytic_enzyme"/>
</dbReference>
<dbReference type="InterPro" id="IPR036514">
    <property type="entry name" value="SGNH_hydro_sf"/>
</dbReference>
<dbReference type="InterPro" id="IPR035669">
    <property type="entry name" value="SGNH_plant_lipase-like"/>
</dbReference>
<dbReference type="PANTHER" id="PTHR45642">
    <property type="entry name" value="GDSL ESTERASE/LIPASE EXL3"/>
    <property type="match status" value="1"/>
</dbReference>
<dbReference type="PANTHER" id="PTHR45642:SF30">
    <property type="entry name" value="SGNH HYDROLASE-TYPE ESTERASE DOMAIN-CONTAINING PROTEIN"/>
    <property type="match status" value="1"/>
</dbReference>
<dbReference type="Pfam" id="PF00657">
    <property type="entry name" value="Lipase_GDSL"/>
    <property type="match status" value="1"/>
</dbReference>
<dbReference type="SUPFAM" id="SSF52266">
    <property type="entry name" value="SGNH hydrolase"/>
    <property type="match status" value="1"/>
</dbReference>
<name>GDL23_ARATH</name>
<evidence type="ECO:0000250" key="1"/>
<evidence type="ECO:0000255" key="2"/>
<evidence type="ECO:0000305" key="3"/>